<keyword id="KW-0066">ATP synthesis</keyword>
<keyword id="KW-1003">Cell membrane</keyword>
<keyword id="KW-0138">CF(0)</keyword>
<keyword id="KW-0375">Hydrogen ion transport</keyword>
<keyword id="KW-0406">Ion transport</keyword>
<keyword id="KW-0472">Membrane</keyword>
<keyword id="KW-0812">Transmembrane</keyword>
<keyword id="KW-1133">Transmembrane helix</keyword>
<keyword id="KW-0813">Transport</keyword>
<dbReference type="EMBL" id="M64265">
    <property type="protein sequence ID" value="AAA26862.1"/>
    <property type="molecule type" value="Genomic_DNA"/>
</dbReference>
<dbReference type="EMBL" id="M90060">
    <property type="protein sequence ID" value="AAA26855.1"/>
    <property type="molecule type" value="Genomic_DNA"/>
</dbReference>
<dbReference type="EMBL" id="CP003504">
    <property type="protein sequence ID" value="AFM70621.1"/>
    <property type="molecule type" value="Genomic_DNA"/>
</dbReference>
<dbReference type="PIR" id="C43259">
    <property type="entry name" value="C43259"/>
</dbReference>
<dbReference type="PIR" id="D43259">
    <property type="entry name" value="D43259"/>
</dbReference>
<dbReference type="RefSeq" id="WP_010718598.1">
    <property type="nucleotide sequence ID" value="NZ_KB946231.1"/>
</dbReference>
<dbReference type="SMR" id="P26681"/>
<dbReference type="GeneID" id="56786973"/>
<dbReference type="KEGG" id="ehr:EHR_08480"/>
<dbReference type="eggNOG" id="COG0711">
    <property type="taxonomic scope" value="Bacteria"/>
</dbReference>
<dbReference type="HOGENOM" id="CLU_079215_4_2_9"/>
<dbReference type="OrthoDB" id="282095at2"/>
<dbReference type="Proteomes" id="UP000002895">
    <property type="component" value="Chromosome"/>
</dbReference>
<dbReference type="GO" id="GO:0005886">
    <property type="term" value="C:plasma membrane"/>
    <property type="evidence" value="ECO:0007669"/>
    <property type="project" value="UniProtKB-SubCell"/>
</dbReference>
<dbReference type="GO" id="GO:0045259">
    <property type="term" value="C:proton-transporting ATP synthase complex"/>
    <property type="evidence" value="ECO:0007669"/>
    <property type="project" value="UniProtKB-KW"/>
</dbReference>
<dbReference type="GO" id="GO:0046933">
    <property type="term" value="F:proton-transporting ATP synthase activity, rotational mechanism"/>
    <property type="evidence" value="ECO:0007669"/>
    <property type="project" value="UniProtKB-UniRule"/>
</dbReference>
<dbReference type="GO" id="GO:0046961">
    <property type="term" value="F:proton-transporting ATPase activity, rotational mechanism"/>
    <property type="evidence" value="ECO:0007669"/>
    <property type="project" value="TreeGrafter"/>
</dbReference>
<dbReference type="CDD" id="cd06503">
    <property type="entry name" value="ATP-synt_Fo_b"/>
    <property type="match status" value="1"/>
</dbReference>
<dbReference type="Gene3D" id="6.10.250.1580">
    <property type="match status" value="1"/>
</dbReference>
<dbReference type="HAMAP" id="MF_01398">
    <property type="entry name" value="ATP_synth_b_bprime"/>
    <property type="match status" value="1"/>
</dbReference>
<dbReference type="InterPro" id="IPR028987">
    <property type="entry name" value="ATP_synth_B-like_membr_sf"/>
</dbReference>
<dbReference type="InterPro" id="IPR002146">
    <property type="entry name" value="ATP_synth_b/b'su_bac/chlpt"/>
</dbReference>
<dbReference type="InterPro" id="IPR005864">
    <property type="entry name" value="ATP_synth_F0_bsu_bac"/>
</dbReference>
<dbReference type="InterPro" id="IPR050059">
    <property type="entry name" value="ATP_synthase_B_chain"/>
</dbReference>
<dbReference type="NCBIfam" id="TIGR01144">
    <property type="entry name" value="ATP_synt_b"/>
    <property type="match status" value="1"/>
</dbReference>
<dbReference type="PANTHER" id="PTHR33445:SF1">
    <property type="entry name" value="ATP SYNTHASE SUBUNIT B"/>
    <property type="match status" value="1"/>
</dbReference>
<dbReference type="PANTHER" id="PTHR33445">
    <property type="entry name" value="ATP SYNTHASE SUBUNIT B', CHLOROPLASTIC"/>
    <property type="match status" value="1"/>
</dbReference>
<dbReference type="Pfam" id="PF00430">
    <property type="entry name" value="ATP-synt_B"/>
    <property type="match status" value="1"/>
</dbReference>
<dbReference type="SUPFAM" id="SSF81573">
    <property type="entry name" value="F1F0 ATP synthase subunit B, membrane domain"/>
    <property type="match status" value="1"/>
</dbReference>
<feature type="chain" id="PRO_0000082374" description="ATP synthase subunit b">
    <location>
        <begin position="1"/>
        <end position="174"/>
    </location>
</feature>
<feature type="transmembrane region" description="Helical" evidence="1">
    <location>
        <begin position="18"/>
        <end position="38"/>
    </location>
</feature>
<evidence type="ECO:0000255" key="1">
    <source>
        <dbReference type="HAMAP-Rule" id="MF_01398"/>
    </source>
</evidence>
<comment type="function">
    <text evidence="1">F(1)F(0) ATP synthase produces ATP from ADP in the presence of a proton or sodium gradient. F-type ATPases consist of two structural domains, F(1) containing the extramembraneous catalytic core and F(0) containing the membrane proton channel, linked together by a central stalk and a peripheral stalk. During catalysis, ATP synthesis in the catalytic domain of F(1) is coupled via a rotary mechanism of the central stalk subunits to proton translocation.</text>
</comment>
<comment type="function">
    <text evidence="1">Component of the F(0) channel, it forms part of the peripheral stalk, linking F(1) to F(0).</text>
</comment>
<comment type="subunit">
    <text evidence="1">F-type ATPases have 2 components, F(1) - the catalytic core - and F(0) - the membrane proton channel. F(1) has five subunits: alpha(3), beta(3), gamma(1), delta(1), epsilon(1). F(0) has three main subunits: a(1), b(2) and c(10-14). The alpha and beta chains form an alternating ring which encloses part of the gamma chain. F(1) is attached to F(0) by a central stalk formed by the gamma and epsilon chains, while a peripheral stalk is formed by the delta and b chains.</text>
</comment>
<comment type="subcellular location">
    <subcellularLocation>
        <location evidence="1">Cell membrane</location>
        <topology evidence="1">Single-pass membrane protein</topology>
    </subcellularLocation>
</comment>
<comment type="similarity">
    <text evidence="1">Belongs to the ATPase B chain family.</text>
</comment>
<sequence>MLNQLAIAEVGNPMLGNIIVVSGSFLILMFLLKHFAWGPISDILKKREDKIANDLDSAEKSRINSAKMEQEREQQLLASRSDAADIIKNAKESGELSRQNILKETQEEVARLKSKAQTDIMLERDTALNSVKDDVADLSLQIAAKILNKELSPEMHESLINQYIEGLGSSNETR</sequence>
<organism>
    <name type="scientific">Enterococcus hirae (strain ATCC 9790 / DSM 20160 / JCM 8729 / LMG 6399 / NBRC 3181 / NCIMB 6459 / NCDO 1258 / NCTC 12367 / WDCM 00089 / R)</name>
    <dbReference type="NCBI Taxonomy" id="768486"/>
    <lineage>
        <taxon>Bacteria</taxon>
        <taxon>Bacillati</taxon>
        <taxon>Bacillota</taxon>
        <taxon>Bacilli</taxon>
        <taxon>Lactobacillales</taxon>
        <taxon>Enterococcaceae</taxon>
        <taxon>Enterococcus</taxon>
    </lineage>
</organism>
<protein>
    <recommendedName>
        <fullName evidence="1">ATP synthase subunit b</fullName>
    </recommendedName>
    <alternativeName>
        <fullName evidence="1">ATP synthase F(0) sector subunit b</fullName>
    </alternativeName>
    <alternativeName>
        <fullName evidence="1">ATPase subunit I</fullName>
    </alternativeName>
    <alternativeName>
        <fullName evidence="1">F-type ATPase subunit b</fullName>
        <shortName evidence="1">F-ATPase subunit b</shortName>
    </alternativeName>
</protein>
<proteinExistence type="inferred from homology"/>
<gene>
    <name evidence="1" type="primary">atpF</name>
    <name type="ordered locus">EHR_08480</name>
</gene>
<name>ATPF_ENTHA</name>
<accession>P26681</accession>
<accession>I6T793</accession>
<reference key="1">
    <citation type="journal article" date="1992" name="J. Bacteriol.">
        <title>Gene structure of Enterococcus hirae (Streptococcus faecalis) F1F0-ATPase, which functions as a regulator of cytoplasmic pH.</title>
        <authorList>
            <person name="Shibata C."/>
            <person name="Ehara T."/>
            <person name="Tomura K."/>
            <person name="Igarashi K."/>
            <person name="Kobayashi H."/>
        </authorList>
    </citation>
    <scope>NUCLEOTIDE SEQUENCE [GENOMIC DNA]</scope>
    <source>
        <strain>ATCC 9790 / DSM 20160 / JCM 8729 / LMG 6399 / NBRC 3181 / NCIMB 6459 / NCDO 1258 / NCTC 12367 / WDCM 00089 / R</strain>
    </source>
</reference>
<reference key="2">
    <citation type="journal article" date="2012" name="J. Bacteriol.">
        <title>Genome sequence of Enterococcus hirae (Streptococcus faecalis) ATCC 9790, a model organism for the study of ion transport, bioenergetics, and copper homeostasis.</title>
        <authorList>
            <person name="Gaechter T."/>
            <person name="Wunderlin C."/>
            <person name="Schmidheini T."/>
            <person name="Solioz M."/>
        </authorList>
    </citation>
    <scope>NUCLEOTIDE SEQUENCE [LARGE SCALE GENOMIC DNA]</scope>
    <source>
        <strain>ATCC 9790 / DSM 20160 / JCM 8729 / LMG 6399 / NBRC 3181 / NCIMB 6459 / NCDO 1258 / NCTC 12367 / WDCM 00089 / R</strain>
    </source>
</reference>